<protein>
    <recommendedName>
        <fullName evidence="1">Small ribosomal subunit protein uS8</fullName>
    </recommendedName>
    <alternativeName>
        <fullName evidence="2">30S ribosomal protein S8</fullName>
    </alternativeName>
</protein>
<gene>
    <name evidence="1" type="primary">rpsH</name>
    <name type="ordered locus">COSY_0183</name>
</gene>
<organism>
    <name type="scientific">Vesicomyosocius okutanii subsp. Calyptogena okutanii (strain HA)</name>
    <dbReference type="NCBI Taxonomy" id="412965"/>
    <lineage>
        <taxon>Bacteria</taxon>
        <taxon>Pseudomonadati</taxon>
        <taxon>Pseudomonadota</taxon>
        <taxon>Gammaproteobacteria</taxon>
        <taxon>Candidatus Pseudothioglobaceae</taxon>
        <taxon>Candidatus Vesicomyosocius</taxon>
    </lineage>
</organism>
<evidence type="ECO:0000255" key="1">
    <source>
        <dbReference type="HAMAP-Rule" id="MF_01302"/>
    </source>
</evidence>
<evidence type="ECO:0000305" key="2"/>
<name>RS8_VESOH</name>
<keyword id="KW-1185">Reference proteome</keyword>
<keyword id="KW-0687">Ribonucleoprotein</keyword>
<keyword id="KW-0689">Ribosomal protein</keyword>
<keyword id="KW-0694">RNA-binding</keyword>
<keyword id="KW-0699">rRNA-binding</keyword>
<sequence>MSMSDPIADMLTRIRNAQLVKKKEVNVPSSNLKFAIAGVMQQEGYIESFSVNGVVASKILKIKLKYYDNKPVIEKLKRISKPSLRVYVSNSKIPSVMNGLGIVIVSTPKGVMTGQVALDQNVGGEVLCSIY</sequence>
<proteinExistence type="inferred from homology"/>
<feature type="chain" id="PRO_0000305761" description="Small ribosomal subunit protein uS8">
    <location>
        <begin position="1"/>
        <end position="131"/>
    </location>
</feature>
<dbReference type="EMBL" id="AP009247">
    <property type="protein sequence ID" value="BAF61313.1"/>
    <property type="molecule type" value="Genomic_DNA"/>
</dbReference>
<dbReference type="RefSeq" id="WP_011929583.1">
    <property type="nucleotide sequence ID" value="NC_009465.1"/>
</dbReference>
<dbReference type="SMR" id="A5CXL8"/>
<dbReference type="STRING" id="412965.COSY_0183"/>
<dbReference type="KEGG" id="vok:COSY_0183"/>
<dbReference type="eggNOG" id="COG0096">
    <property type="taxonomic scope" value="Bacteria"/>
</dbReference>
<dbReference type="HOGENOM" id="CLU_098428_0_0_6"/>
<dbReference type="OrthoDB" id="9802617at2"/>
<dbReference type="Proteomes" id="UP000000247">
    <property type="component" value="Chromosome"/>
</dbReference>
<dbReference type="GO" id="GO:1990904">
    <property type="term" value="C:ribonucleoprotein complex"/>
    <property type="evidence" value="ECO:0007669"/>
    <property type="project" value="UniProtKB-KW"/>
</dbReference>
<dbReference type="GO" id="GO:0005840">
    <property type="term" value="C:ribosome"/>
    <property type="evidence" value="ECO:0007669"/>
    <property type="project" value="UniProtKB-KW"/>
</dbReference>
<dbReference type="GO" id="GO:0019843">
    <property type="term" value="F:rRNA binding"/>
    <property type="evidence" value="ECO:0007669"/>
    <property type="project" value="UniProtKB-UniRule"/>
</dbReference>
<dbReference type="GO" id="GO:0003735">
    <property type="term" value="F:structural constituent of ribosome"/>
    <property type="evidence" value="ECO:0007669"/>
    <property type="project" value="InterPro"/>
</dbReference>
<dbReference type="GO" id="GO:0006412">
    <property type="term" value="P:translation"/>
    <property type="evidence" value="ECO:0007669"/>
    <property type="project" value="UniProtKB-UniRule"/>
</dbReference>
<dbReference type="FunFam" id="3.30.1370.30:FF:000002">
    <property type="entry name" value="30S ribosomal protein S8"/>
    <property type="match status" value="1"/>
</dbReference>
<dbReference type="FunFam" id="3.30.1490.10:FF:000001">
    <property type="entry name" value="30S ribosomal protein S8"/>
    <property type="match status" value="1"/>
</dbReference>
<dbReference type="Gene3D" id="3.30.1370.30">
    <property type="match status" value="1"/>
</dbReference>
<dbReference type="Gene3D" id="3.30.1490.10">
    <property type="match status" value="1"/>
</dbReference>
<dbReference type="HAMAP" id="MF_01302_B">
    <property type="entry name" value="Ribosomal_uS8_B"/>
    <property type="match status" value="1"/>
</dbReference>
<dbReference type="InterPro" id="IPR000630">
    <property type="entry name" value="Ribosomal_uS8"/>
</dbReference>
<dbReference type="InterPro" id="IPR047863">
    <property type="entry name" value="Ribosomal_uS8_CS"/>
</dbReference>
<dbReference type="InterPro" id="IPR035987">
    <property type="entry name" value="Ribosomal_uS8_sf"/>
</dbReference>
<dbReference type="NCBIfam" id="NF001109">
    <property type="entry name" value="PRK00136.1"/>
    <property type="match status" value="1"/>
</dbReference>
<dbReference type="PANTHER" id="PTHR11758">
    <property type="entry name" value="40S RIBOSOMAL PROTEIN S15A"/>
    <property type="match status" value="1"/>
</dbReference>
<dbReference type="Pfam" id="PF00410">
    <property type="entry name" value="Ribosomal_S8"/>
    <property type="match status" value="1"/>
</dbReference>
<dbReference type="SUPFAM" id="SSF56047">
    <property type="entry name" value="Ribosomal protein S8"/>
    <property type="match status" value="1"/>
</dbReference>
<dbReference type="PROSITE" id="PS00053">
    <property type="entry name" value="RIBOSOMAL_S8"/>
    <property type="match status" value="1"/>
</dbReference>
<accession>A5CXL8</accession>
<comment type="function">
    <text evidence="1">One of the primary rRNA binding proteins, it binds directly to 16S rRNA central domain where it helps coordinate assembly of the platform of the 30S subunit.</text>
</comment>
<comment type="subunit">
    <text evidence="1">Part of the 30S ribosomal subunit. Contacts proteins S5 and S12.</text>
</comment>
<comment type="similarity">
    <text evidence="1">Belongs to the universal ribosomal protein uS8 family.</text>
</comment>
<reference key="1">
    <citation type="journal article" date="2007" name="Curr. Biol.">
        <title>Reduced genome of the thioautotrophic intracellular symbiont in a deep-sea clam, Calyptogena okutanii.</title>
        <authorList>
            <person name="Kuwahara H."/>
            <person name="Yoshida T."/>
            <person name="Takaki Y."/>
            <person name="Shimamura S."/>
            <person name="Nishi S."/>
            <person name="Harada M."/>
            <person name="Matsuyama K."/>
            <person name="Takishita K."/>
            <person name="Kawato M."/>
            <person name="Uematsu K."/>
            <person name="Fujiwara Y."/>
            <person name="Sato T."/>
            <person name="Kato C."/>
            <person name="Kitagawa M."/>
            <person name="Kato I."/>
            <person name="Maruyama T."/>
        </authorList>
    </citation>
    <scope>NUCLEOTIDE SEQUENCE [LARGE SCALE GENOMIC DNA]</scope>
    <source>
        <strain>HA</strain>
    </source>
</reference>